<accession>B4TCQ3</accession>
<sequence>MKNVLPPFIEIYRALIATPSISATEESLDQSNASLITLLAGWFSDLGFNVEVQPVPGTRNKFNMLASTGHGAGGLLLTGHTDTVPFDDGRWTRDPFTLTEHDNKLYGLGTADMKGFFAFILDALRDVDVTKLKKPLYILATADEETSMAGARYFSETTALRPDCAIIGEPTSLQPIRAHKGHISNVVRVLGQSGHSSDPARGVNAIELMHDAIGHIMQLRDSLKTRYHYEAFTVPYPTLNLGHIHGGDASNRICACCELHMDIRPLPGMTLNDLNGLLNDALAPVSERWPGRLTVAELHPPIPGYECPPDHQLVEVVEKLLGTKTDVVNYCTEAPFMQTLCPTLVLGPGSINQAHQPDEYLETRFIKPTRELITQVVHHFCWH</sequence>
<evidence type="ECO:0000255" key="1">
    <source>
        <dbReference type="HAMAP-Rule" id="MF_01108"/>
    </source>
</evidence>
<organism>
    <name type="scientific">Salmonella heidelberg (strain SL476)</name>
    <dbReference type="NCBI Taxonomy" id="454169"/>
    <lineage>
        <taxon>Bacteria</taxon>
        <taxon>Pseudomonadati</taxon>
        <taxon>Pseudomonadota</taxon>
        <taxon>Gammaproteobacteria</taxon>
        <taxon>Enterobacterales</taxon>
        <taxon>Enterobacteriaceae</taxon>
        <taxon>Salmonella</taxon>
    </lineage>
</organism>
<proteinExistence type="inferred from homology"/>
<name>ARGE_SALHS</name>
<dbReference type="EC" id="3.5.1.16" evidence="1"/>
<dbReference type="EMBL" id="CP001120">
    <property type="protein sequence ID" value="ACF69281.1"/>
    <property type="molecule type" value="Genomic_DNA"/>
</dbReference>
<dbReference type="RefSeq" id="WP_000800209.1">
    <property type="nucleotide sequence ID" value="NC_011083.1"/>
</dbReference>
<dbReference type="SMR" id="B4TCQ3"/>
<dbReference type="MEROPS" id="M20.974"/>
<dbReference type="KEGG" id="seh:SeHA_C4448"/>
<dbReference type="HOGENOM" id="CLU_021802_2_4_6"/>
<dbReference type="UniPathway" id="UPA00068">
    <property type="reaction ID" value="UER00110"/>
</dbReference>
<dbReference type="Proteomes" id="UP000001866">
    <property type="component" value="Chromosome"/>
</dbReference>
<dbReference type="GO" id="GO:0005737">
    <property type="term" value="C:cytoplasm"/>
    <property type="evidence" value="ECO:0007669"/>
    <property type="project" value="UniProtKB-SubCell"/>
</dbReference>
<dbReference type="GO" id="GO:0008777">
    <property type="term" value="F:acetylornithine deacetylase activity"/>
    <property type="evidence" value="ECO:0007669"/>
    <property type="project" value="UniProtKB-UniRule"/>
</dbReference>
<dbReference type="GO" id="GO:0008270">
    <property type="term" value="F:zinc ion binding"/>
    <property type="evidence" value="ECO:0007669"/>
    <property type="project" value="UniProtKB-UniRule"/>
</dbReference>
<dbReference type="GO" id="GO:0006526">
    <property type="term" value="P:L-arginine biosynthetic process"/>
    <property type="evidence" value="ECO:0007669"/>
    <property type="project" value="UniProtKB-UniRule"/>
</dbReference>
<dbReference type="CDD" id="cd03894">
    <property type="entry name" value="M20_ArgE"/>
    <property type="match status" value="1"/>
</dbReference>
<dbReference type="FunFam" id="3.30.70.360:FF:000003">
    <property type="entry name" value="Acetylornithine deacetylase"/>
    <property type="match status" value="1"/>
</dbReference>
<dbReference type="Gene3D" id="3.30.70.360">
    <property type="match status" value="1"/>
</dbReference>
<dbReference type="Gene3D" id="3.40.630.10">
    <property type="entry name" value="Zn peptidases"/>
    <property type="match status" value="1"/>
</dbReference>
<dbReference type="HAMAP" id="MF_01108">
    <property type="entry name" value="ArgE"/>
    <property type="match status" value="1"/>
</dbReference>
<dbReference type="InterPro" id="IPR010169">
    <property type="entry name" value="AcOrn-deacetyl"/>
</dbReference>
<dbReference type="InterPro" id="IPR001261">
    <property type="entry name" value="ArgE/DapE_CS"/>
</dbReference>
<dbReference type="InterPro" id="IPR036264">
    <property type="entry name" value="Bact_exopeptidase_dim_dom"/>
</dbReference>
<dbReference type="InterPro" id="IPR002933">
    <property type="entry name" value="Peptidase_M20"/>
</dbReference>
<dbReference type="InterPro" id="IPR011650">
    <property type="entry name" value="Peptidase_M20_dimer"/>
</dbReference>
<dbReference type="InterPro" id="IPR050072">
    <property type="entry name" value="Peptidase_M20A"/>
</dbReference>
<dbReference type="NCBIfam" id="TIGR01892">
    <property type="entry name" value="AcOrn-deacetyl"/>
    <property type="match status" value="1"/>
</dbReference>
<dbReference type="NCBIfam" id="NF003474">
    <property type="entry name" value="PRK05111.1"/>
    <property type="match status" value="1"/>
</dbReference>
<dbReference type="PANTHER" id="PTHR43808">
    <property type="entry name" value="ACETYLORNITHINE DEACETYLASE"/>
    <property type="match status" value="1"/>
</dbReference>
<dbReference type="PANTHER" id="PTHR43808:SF1">
    <property type="entry name" value="ACETYLORNITHINE DEACETYLASE"/>
    <property type="match status" value="1"/>
</dbReference>
<dbReference type="Pfam" id="PF07687">
    <property type="entry name" value="M20_dimer"/>
    <property type="match status" value="1"/>
</dbReference>
<dbReference type="Pfam" id="PF01546">
    <property type="entry name" value="Peptidase_M20"/>
    <property type="match status" value="1"/>
</dbReference>
<dbReference type="SUPFAM" id="SSF55031">
    <property type="entry name" value="Bacterial exopeptidase dimerisation domain"/>
    <property type="match status" value="1"/>
</dbReference>
<dbReference type="SUPFAM" id="SSF53187">
    <property type="entry name" value="Zn-dependent exopeptidases"/>
    <property type="match status" value="1"/>
</dbReference>
<dbReference type="PROSITE" id="PS00758">
    <property type="entry name" value="ARGE_DAPE_CPG2_1"/>
    <property type="match status" value="1"/>
</dbReference>
<dbReference type="PROSITE" id="PS00759">
    <property type="entry name" value="ARGE_DAPE_CPG2_2"/>
    <property type="match status" value="1"/>
</dbReference>
<reference key="1">
    <citation type="journal article" date="2011" name="J. Bacteriol.">
        <title>Comparative genomics of 28 Salmonella enterica isolates: evidence for CRISPR-mediated adaptive sublineage evolution.</title>
        <authorList>
            <person name="Fricke W.F."/>
            <person name="Mammel M.K."/>
            <person name="McDermott P.F."/>
            <person name="Tartera C."/>
            <person name="White D.G."/>
            <person name="Leclerc J.E."/>
            <person name="Ravel J."/>
            <person name="Cebula T.A."/>
        </authorList>
    </citation>
    <scope>NUCLEOTIDE SEQUENCE [LARGE SCALE GENOMIC DNA]</scope>
    <source>
        <strain>SL476</strain>
    </source>
</reference>
<keyword id="KW-0028">Amino-acid biosynthesis</keyword>
<keyword id="KW-0055">Arginine biosynthesis</keyword>
<keyword id="KW-0170">Cobalt</keyword>
<keyword id="KW-0963">Cytoplasm</keyword>
<keyword id="KW-0378">Hydrolase</keyword>
<keyword id="KW-0479">Metal-binding</keyword>
<keyword id="KW-0862">Zinc</keyword>
<comment type="function">
    <text evidence="1">Catalyzes the hydrolysis of the amide bond of N(2)-acetylated L-amino acids. Cleaves the acetyl group from N-acetyl-L-ornithine to form L-ornithine, an intermediate in L-arginine biosynthesis pathway, and a branchpoint in the synthesis of polyamines.</text>
</comment>
<comment type="catalytic activity">
    <reaction evidence="1">
        <text>N(2)-acetyl-L-ornithine + H2O = L-ornithine + acetate</text>
        <dbReference type="Rhea" id="RHEA:15941"/>
        <dbReference type="ChEBI" id="CHEBI:15377"/>
        <dbReference type="ChEBI" id="CHEBI:30089"/>
        <dbReference type="ChEBI" id="CHEBI:46911"/>
        <dbReference type="ChEBI" id="CHEBI:57805"/>
        <dbReference type="EC" id="3.5.1.16"/>
    </reaction>
</comment>
<comment type="cofactor">
    <cofactor evidence="1">
        <name>Zn(2+)</name>
        <dbReference type="ChEBI" id="CHEBI:29105"/>
    </cofactor>
    <cofactor evidence="1">
        <name>Co(2+)</name>
        <dbReference type="ChEBI" id="CHEBI:48828"/>
    </cofactor>
    <text evidence="1">Binds 2 Zn(2+) or Co(2+) ions per subunit.</text>
</comment>
<comment type="cofactor">
    <cofactor evidence="1">
        <name>glutathione</name>
        <dbReference type="ChEBI" id="CHEBI:57925"/>
    </cofactor>
</comment>
<comment type="pathway">
    <text evidence="1">Amino-acid biosynthesis; L-arginine biosynthesis; L-ornithine from N(2)-acetyl-L-ornithine (linear): step 1/1.</text>
</comment>
<comment type="subunit">
    <text evidence="1">Homodimer.</text>
</comment>
<comment type="subcellular location">
    <subcellularLocation>
        <location evidence="1">Cytoplasm</location>
    </subcellularLocation>
</comment>
<comment type="similarity">
    <text evidence="1">Belongs to the peptidase M20A family. ArgE subfamily.</text>
</comment>
<feature type="chain" id="PRO_1000137077" description="Acetylornithine deacetylase">
    <location>
        <begin position="1"/>
        <end position="383"/>
    </location>
</feature>
<feature type="active site" evidence="1">
    <location>
        <position position="82"/>
    </location>
</feature>
<feature type="active site" evidence="1">
    <location>
        <position position="144"/>
    </location>
</feature>
<feature type="binding site" evidence="1">
    <location>
        <position position="80"/>
    </location>
    <ligand>
        <name>Zn(2+)</name>
        <dbReference type="ChEBI" id="CHEBI:29105"/>
        <label>1</label>
    </ligand>
</feature>
<feature type="binding site" evidence="1">
    <location>
        <position position="112"/>
    </location>
    <ligand>
        <name>Zn(2+)</name>
        <dbReference type="ChEBI" id="CHEBI:29105"/>
        <label>1</label>
    </ligand>
</feature>
<feature type="binding site" evidence="1">
    <location>
        <position position="112"/>
    </location>
    <ligand>
        <name>Zn(2+)</name>
        <dbReference type="ChEBI" id="CHEBI:29105"/>
        <label>2</label>
    </ligand>
</feature>
<feature type="binding site" evidence="1">
    <location>
        <position position="145"/>
    </location>
    <ligand>
        <name>Zn(2+)</name>
        <dbReference type="ChEBI" id="CHEBI:29105"/>
        <label>2</label>
    </ligand>
</feature>
<feature type="binding site" evidence="1">
    <location>
        <position position="169"/>
    </location>
    <ligand>
        <name>Zn(2+)</name>
        <dbReference type="ChEBI" id="CHEBI:29105"/>
        <label>1</label>
    </ligand>
</feature>
<feature type="binding site" evidence="1">
    <location>
        <position position="355"/>
    </location>
    <ligand>
        <name>Zn(2+)</name>
        <dbReference type="ChEBI" id="CHEBI:29105"/>
        <label>2</label>
    </ligand>
</feature>
<gene>
    <name evidence="1" type="primary">argE</name>
    <name type="ordered locus">SeHA_C4448</name>
</gene>
<protein>
    <recommendedName>
        <fullName evidence="1">Acetylornithine deacetylase</fullName>
        <shortName evidence="1">AO</shortName>
        <shortName evidence="1">Acetylornithinase</shortName>
        <ecNumber evidence="1">3.5.1.16</ecNumber>
    </recommendedName>
    <alternativeName>
        <fullName evidence="1">N-acetylornithinase</fullName>
        <shortName evidence="1">NAO</shortName>
    </alternativeName>
</protein>